<comment type="function">
    <text>Auxin response factors (ARFs) are transcriptional factors that bind specifically to the DNA sequence 5'-TGTCTC-3' found in the auxin-responsive promoter elements (AuxREs).</text>
</comment>
<comment type="subunit">
    <text evidence="1">Homo and heterodimers.</text>
</comment>
<comment type="subcellular location">
    <subcellularLocation>
        <location evidence="2">Nucleus</location>
    </subcellularLocation>
</comment>
<comment type="tissue specificity">
    <text evidence="4">Expressed in roots, culms, leaves and young panicles.</text>
</comment>
<comment type="similarity">
    <text evidence="5">Belongs to the ARF family.</text>
</comment>
<accession>Q7XSS9</accession>
<accession>A0A0P0WGN0</accession>
<accession>B7F2A9</accession>
<feature type="chain" id="PRO_0000299270" description="Auxin response factor 13">
    <location>
        <begin position="1"/>
        <end position="529"/>
    </location>
</feature>
<feature type="DNA-binding region" description="TF-B3" evidence="2">
    <location>
        <begin position="128"/>
        <end position="234"/>
    </location>
</feature>
<feature type="region of interest" description="Disordered" evidence="3">
    <location>
        <begin position="1"/>
        <end position="22"/>
    </location>
</feature>
<feature type="region of interest" description="Disordered" evidence="3">
    <location>
        <begin position="443"/>
        <end position="462"/>
    </location>
</feature>
<feature type="region of interest" description="Disordered" evidence="3">
    <location>
        <begin position="497"/>
        <end position="529"/>
    </location>
</feature>
<feature type="compositionally biased region" description="Pro residues" evidence="3">
    <location>
        <begin position="7"/>
        <end position="22"/>
    </location>
</feature>
<feature type="compositionally biased region" description="Polar residues" evidence="3">
    <location>
        <begin position="444"/>
        <end position="461"/>
    </location>
</feature>
<feature type="compositionally biased region" description="Acidic residues" evidence="3">
    <location>
        <begin position="499"/>
        <end position="510"/>
    </location>
</feature>
<feature type="compositionally biased region" description="Polar residues" evidence="3">
    <location>
        <begin position="511"/>
        <end position="523"/>
    </location>
</feature>
<sequence>MARPPAATAPPPPPPPPPPPPPPIDRLVWLACAAPLSRIPVVGTQVSYFPEGHAEQCPAPLPDPLPSAHRFFLCTITAVDLSADTTTGEPYATISLLPLRHDAPAPAPAPAPAAAELAEAESQEFRYYAKQLTQSDANNGGGFSVPRLCADHIFPALNLDDDPPVQSLTMGDLQGDSWEFRHIYRGTPRRHLLTTGWSKFVNAKQLVAGDTVVFMWCGAPAPERKLLVGVRRAARYSGESACNARGRVQPQEVMEAVRLAAEQAAFRVTYYPRHGAGEFVVPRVEVDKGLTTPWRCGMQVRAQVMEAEDTRRLAWLNGTLTNLRHQQIWRTLEVEWDASAASSSMKNRFVNPWQVQPVDFPPLPMGLKISNNNISAPVCNGDSLLVPPILMHPQPQPPADIQGARHNNGHAYADIPSSSTPSMVRTQQLFPRDLQILVPHTDIVTPQNGSPPDNPVNTPLSASDGMKTIQLFGVTITSPVQGDTNGAFASAQVNQVPEGVDDETATEEASDTSLPDSLTNGHNQDGARL</sequence>
<gene>
    <name type="primary">ARF13</name>
    <name type="ordered locus">Os04g0690600</name>
    <name type="ordered locus">LOC_Os04g59430</name>
    <name type="ORF">OSJNBa0039K24.27</name>
</gene>
<protein>
    <recommendedName>
        <fullName>Auxin response factor 13</fullName>
    </recommendedName>
</protein>
<proteinExistence type="evidence at transcript level"/>
<dbReference type="EMBL" id="AL606637">
    <property type="protein sequence ID" value="CAE01808.2"/>
    <property type="molecule type" value="Genomic_DNA"/>
</dbReference>
<dbReference type="EMBL" id="AP008210">
    <property type="protein sequence ID" value="BAF16267.1"/>
    <property type="molecule type" value="Genomic_DNA"/>
</dbReference>
<dbReference type="EMBL" id="AP014960">
    <property type="protein sequence ID" value="BAS91774.1"/>
    <property type="molecule type" value="Genomic_DNA"/>
</dbReference>
<dbReference type="EMBL" id="AK109449">
    <property type="protein sequence ID" value="BAG98756.1"/>
    <property type="molecule type" value="mRNA"/>
</dbReference>
<dbReference type="RefSeq" id="XP_015634416.1">
    <property type="nucleotide sequence ID" value="XM_015778930.1"/>
</dbReference>
<dbReference type="SMR" id="Q7XSS9"/>
<dbReference type="FunCoup" id="Q7XSS9">
    <property type="interactions" value="741"/>
</dbReference>
<dbReference type="PaxDb" id="39947-Q7XSS9"/>
<dbReference type="EnsemblPlants" id="Os04t0690600-01">
    <property type="protein sequence ID" value="Os04t0690600-01"/>
    <property type="gene ID" value="Os04g0690600"/>
</dbReference>
<dbReference type="Gramene" id="Os04t0690600-01">
    <property type="protein sequence ID" value="Os04t0690600-01"/>
    <property type="gene ID" value="Os04g0690600"/>
</dbReference>
<dbReference type="eggNOG" id="ENOG502QVP0">
    <property type="taxonomic scope" value="Eukaryota"/>
</dbReference>
<dbReference type="HOGENOM" id="CLU_002626_3_4_1"/>
<dbReference type="InParanoid" id="Q7XSS9"/>
<dbReference type="OMA" id="HRFFLCT"/>
<dbReference type="OrthoDB" id="1414159at2759"/>
<dbReference type="PlantReactome" id="R-OSA-5608118">
    <property type="pathway name" value="Auxin signalling"/>
</dbReference>
<dbReference type="Proteomes" id="UP000000763">
    <property type="component" value="Chromosome 4"/>
</dbReference>
<dbReference type="Proteomes" id="UP000059680">
    <property type="component" value="Chromosome 4"/>
</dbReference>
<dbReference type="GO" id="GO:0005634">
    <property type="term" value="C:nucleus"/>
    <property type="evidence" value="ECO:0007669"/>
    <property type="project" value="UniProtKB-SubCell"/>
</dbReference>
<dbReference type="GO" id="GO:0003677">
    <property type="term" value="F:DNA binding"/>
    <property type="evidence" value="ECO:0007669"/>
    <property type="project" value="UniProtKB-KW"/>
</dbReference>
<dbReference type="GO" id="GO:0009734">
    <property type="term" value="P:auxin-activated signaling pathway"/>
    <property type="evidence" value="ECO:0007669"/>
    <property type="project" value="UniProtKB-KW"/>
</dbReference>
<dbReference type="GO" id="GO:0006355">
    <property type="term" value="P:regulation of DNA-templated transcription"/>
    <property type="evidence" value="ECO:0007669"/>
    <property type="project" value="InterPro"/>
</dbReference>
<dbReference type="CDD" id="cd10017">
    <property type="entry name" value="B3_DNA"/>
    <property type="match status" value="1"/>
</dbReference>
<dbReference type="FunFam" id="2.40.330.10:FF:000001">
    <property type="entry name" value="Auxin response factor"/>
    <property type="match status" value="1"/>
</dbReference>
<dbReference type="Gene3D" id="2.30.30.1040">
    <property type="match status" value="1"/>
</dbReference>
<dbReference type="Gene3D" id="2.40.330.10">
    <property type="entry name" value="DNA-binding pseudobarrel domain"/>
    <property type="match status" value="1"/>
</dbReference>
<dbReference type="InterPro" id="IPR010525">
    <property type="entry name" value="ARF_dom"/>
</dbReference>
<dbReference type="InterPro" id="IPR044835">
    <property type="entry name" value="ARF_plant"/>
</dbReference>
<dbReference type="InterPro" id="IPR003340">
    <property type="entry name" value="B3_DNA-bd"/>
</dbReference>
<dbReference type="InterPro" id="IPR015300">
    <property type="entry name" value="DNA-bd_pseudobarrel_sf"/>
</dbReference>
<dbReference type="PANTHER" id="PTHR31384:SF94">
    <property type="entry name" value="AUXIN RESPONSE FACTOR 17"/>
    <property type="match status" value="1"/>
</dbReference>
<dbReference type="PANTHER" id="PTHR31384">
    <property type="entry name" value="AUXIN RESPONSE FACTOR 4-RELATED"/>
    <property type="match status" value="1"/>
</dbReference>
<dbReference type="Pfam" id="PF06507">
    <property type="entry name" value="ARF_AD"/>
    <property type="match status" value="1"/>
</dbReference>
<dbReference type="Pfam" id="PF02362">
    <property type="entry name" value="B3"/>
    <property type="match status" value="1"/>
</dbReference>
<dbReference type="SMART" id="SM01019">
    <property type="entry name" value="B3"/>
    <property type="match status" value="1"/>
</dbReference>
<dbReference type="SUPFAM" id="SSF101936">
    <property type="entry name" value="DNA-binding pseudobarrel domain"/>
    <property type="match status" value="1"/>
</dbReference>
<dbReference type="PROSITE" id="PS50863">
    <property type="entry name" value="B3"/>
    <property type="match status" value="1"/>
</dbReference>
<reference key="1">
    <citation type="journal article" date="2002" name="Nature">
        <title>Sequence and analysis of rice chromosome 4.</title>
        <authorList>
            <person name="Feng Q."/>
            <person name="Zhang Y."/>
            <person name="Hao P."/>
            <person name="Wang S."/>
            <person name="Fu G."/>
            <person name="Huang Y."/>
            <person name="Li Y."/>
            <person name="Zhu J."/>
            <person name="Liu Y."/>
            <person name="Hu X."/>
            <person name="Jia P."/>
            <person name="Zhang Y."/>
            <person name="Zhao Q."/>
            <person name="Ying K."/>
            <person name="Yu S."/>
            <person name="Tang Y."/>
            <person name="Weng Q."/>
            <person name="Zhang L."/>
            <person name="Lu Y."/>
            <person name="Mu J."/>
            <person name="Lu Y."/>
            <person name="Zhang L.S."/>
            <person name="Yu Z."/>
            <person name="Fan D."/>
            <person name="Liu X."/>
            <person name="Lu T."/>
            <person name="Li C."/>
            <person name="Wu Y."/>
            <person name="Sun T."/>
            <person name="Lei H."/>
            <person name="Li T."/>
            <person name="Hu H."/>
            <person name="Guan J."/>
            <person name="Wu M."/>
            <person name="Zhang R."/>
            <person name="Zhou B."/>
            <person name="Chen Z."/>
            <person name="Chen L."/>
            <person name="Jin Z."/>
            <person name="Wang R."/>
            <person name="Yin H."/>
            <person name="Cai Z."/>
            <person name="Ren S."/>
            <person name="Lv G."/>
            <person name="Gu W."/>
            <person name="Zhu G."/>
            <person name="Tu Y."/>
            <person name="Jia J."/>
            <person name="Zhang Y."/>
            <person name="Chen J."/>
            <person name="Kang H."/>
            <person name="Chen X."/>
            <person name="Shao C."/>
            <person name="Sun Y."/>
            <person name="Hu Q."/>
            <person name="Zhang X."/>
            <person name="Zhang W."/>
            <person name="Wang L."/>
            <person name="Ding C."/>
            <person name="Sheng H."/>
            <person name="Gu J."/>
            <person name="Chen S."/>
            <person name="Ni L."/>
            <person name="Zhu F."/>
            <person name="Chen W."/>
            <person name="Lan L."/>
            <person name="Lai Y."/>
            <person name="Cheng Z."/>
            <person name="Gu M."/>
            <person name="Jiang J."/>
            <person name="Li J."/>
            <person name="Hong G."/>
            <person name="Xue Y."/>
            <person name="Han B."/>
        </authorList>
    </citation>
    <scope>NUCLEOTIDE SEQUENCE [LARGE SCALE GENOMIC DNA]</scope>
    <source>
        <strain>cv. Nipponbare</strain>
    </source>
</reference>
<reference key="2">
    <citation type="journal article" date="2005" name="Nature">
        <title>The map-based sequence of the rice genome.</title>
        <authorList>
            <consortium name="International rice genome sequencing project (IRGSP)"/>
        </authorList>
    </citation>
    <scope>NUCLEOTIDE SEQUENCE [LARGE SCALE GENOMIC DNA]</scope>
    <source>
        <strain>cv. Nipponbare</strain>
    </source>
</reference>
<reference key="3">
    <citation type="journal article" date="2008" name="Nucleic Acids Res.">
        <title>The rice annotation project database (RAP-DB): 2008 update.</title>
        <authorList>
            <consortium name="The rice annotation project (RAP)"/>
        </authorList>
    </citation>
    <scope>GENOME REANNOTATION</scope>
    <source>
        <strain>cv. Nipponbare</strain>
    </source>
</reference>
<reference key="4">
    <citation type="journal article" date="2013" name="Rice">
        <title>Improvement of the Oryza sativa Nipponbare reference genome using next generation sequence and optical map data.</title>
        <authorList>
            <person name="Kawahara Y."/>
            <person name="de la Bastide M."/>
            <person name="Hamilton J.P."/>
            <person name="Kanamori H."/>
            <person name="McCombie W.R."/>
            <person name="Ouyang S."/>
            <person name="Schwartz D.C."/>
            <person name="Tanaka T."/>
            <person name="Wu J."/>
            <person name="Zhou S."/>
            <person name="Childs K.L."/>
            <person name="Davidson R.M."/>
            <person name="Lin H."/>
            <person name="Quesada-Ocampo L."/>
            <person name="Vaillancourt B."/>
            <person name="Sakai H."/>
            <person name="Lee S.S."/>
            <person name="Kim J."/>
            <person name="Numa H."/>
            <person name="Itoh T."/>
            <person name="Buell C.R."/>
            <person name="Matsumoto T."/>
        </authorList>
    </citation>
    <scope>GENOME REANNOTATION</scope>
    <source>
        <strain>cv. Nipponbare</strain>
    </source>
</reference>
<reference key="5">
    <citation type="journal article" date="2003" name="Science">
        <title>Collection, mapping, and annotation of over 28,000 cDNA clones from japonica rice.</title>
        <authorList>
            <consortium name="The rice full-length cDNA consortium"/>
        </authorList>
    </citation>
    <scope>NUCLEOTIDE SEQUENCE [LARGE SCALE MRNA]</scope>
    <source>
        <strain>cv. Nipponbare</strain>
    </source>
</reference>
<reference key="6">
    <citation type="journal article" date="2007" name="Gene">
        <title>Genome-wide analysis of the auxin response factors (ARF) gene family in rice (Oryza sativa).</title>
        <authorList>
            <person name="Wang D."/>
            <person name="Pei K."/>
            <person name="Fu Y."/>
            <person name="Sun Z."/>
            <person name="Li S."/>
            <person name="Liu H."/>
            <person name="Tang K."/>
            <person name="Han B."/>
            <person name="Tao Y."/>
        </authorList>
    </citation>
    <scope>GENE FAMILY</scope>
    <scope>TISSUE SPECIFICITY</scope>
    <scope>NOMENCLATURE</scope>
</reference>
<organism>
    <name type="scientific">Oryza sativa subsp. japonica</name>
    <name type="common">Rice</name>
    <dbReference type="NCBI Taxonomy" id="39947"/>
    <lineage>
        <taxon>Eukaryota</taxon>
        <taxon>Viridiplantae</taxon>
        <taxon>Streptophyta</taxon>
        <taxon>Embryophyta</taxon>
        <taxon>Tracheophyta</taxon>
        <taxon>Spermatophyta</taxon>
        <taxon>Magnoliopsida</taxon>
        <taxon>Liliopsida</taxon>
        <taxon>Poales</taxon>
        <taxon>Poaceae</taxon>
        <taxon>BOP clade</taxon>
        <taxon>Oryzoideae</taxon>
        <taxon>Oryzeae</taxon>
        <taxon>Oryzinae</taxon>
        <taxon>Oryza</taxon>
        <taxon>Oryza sativa</taxon>
    </lineage>
</organism>
<keyword id="KW-0927">Auxin signaling pathway</keyword>
<keyword id="KW-0238">DNA-binding</keyword>
<keyword id="KW-0539">Nucleus</keyword>
<keyword id="KW-1185">Reference proteome</keyword>
<keyword id="KW-0804">Transcription</keyword>
<keyword id="KW-0805">Transcription regulation</keyword>
<name>ARFM_ORYSJ</name>
<evidence type="ECO:0000250" key="1"/>
<evidence type="ECO:0000255" key="2">
    <source>
        <dbReference type="PROSITE-ProRule" id="PRU00326"/>
    </source>
</evidence>
<evidence type="ECO:0000256" key="3">
    <source>
        <dbReference type="SAM" id="MobiDB-lite"/>
    </source>
</evidence>
<evidence type="ECO:0000269" key="4">
    <source>
    </source>
</evidence>
<evidence type="ECO:0000305" key="5"/>